<organism>
    <name type="scientific">Mycolicibacterium gilvum (strain PYR-GCK)</name>
    <name type="common">Mycobacterium gilvum (strain PYR-GCK)</name>
    <dbReference type="NCBI Taxonomy" id="350054"/>
    <lineage>
        <taxon>Bacteria</taxon>
        <taxon>Bacillati</taxon>
        <taxon>Actinomycetota</taxon>
        <taxon>Actinomycetes</taxon>
        <taxon>Mycobacteriales</taxon>
        <taxon>Mycobacteriaceae</taxon>
        <taxon>Mycolicibacterium</taxon>
    </lineage>
</organism>
<proteinExistence type="inferred from homology"/>
<name>RL30_MYCGI</name>
<comment type="subunit">
    <text evidence="1">Part of the 50S ribosomal subunit.</text>
</comment>
<comment type="similarity">
    <text evidence="1">Belongs to the universal ribosomal protein uL30 family.</text>
</comment>
<sequence>MAELKITQVRSTIGARWKQRESLRTLGLRKIRQSVVREDNAQTRGLIKTVHHLVEVEEVKA</sequence>
<dbReference type="EMBL" id="CP000656">
    <property type="protein sequence ID" value="ABP47495.1"/>
    <property type="molecule type" value="Genomic_DNA"/>
</dbReference>
<dbReference type="SMR" id="A4TED3"/>
<dbReference type="STRING" id="350054.Mflv_5029"/>
<dbReference type="KEGG" id="mgi:Mflv_5029"/>
<dbReference type="eggNOG" id="COG1841">
    <property type="taxonomic scope" value="Bacteria"/>
</dbReference>
<dbReference type="HOGENOM" id="CLU_131047_2_0_11"/>
<dbReference type="OrthoDB" id="9812790at2"/>
<dbReference type="GO" id="GO:0022625">
    <property type="term" value="C:cytosolic large ribosomal subunit"/>
    <property type="evidence" value="ECO:0007669"/>
    <property type="project" value="TreeGrafter"/>
</dbReference>
<dbReference type="GO" id="GO:0003735">
    <property type="term" value="F:structural constituent of ribosome"/>
    <property type="evidence" value="ECO:0007669"/>
    <property type="project" value="InterPro"/>
</dbReference>
<dbReference type="GO" id="GO:0006412">
    <property type="term" value="P:translation"/>
    <property type="evidence" value="ECO:0007669"/>
    <property type="project" value="UniProtKB-UniRule"/>
</dbReference>
<dbReference type="CDD" id="cd01658">
    <property type="entry name" value="Ribosomal_L30"/>
    <property type="match status" value="1"/>
</dbReference>
<dbReference type="FunFam" id="3.30.1390.20:FF:000001">
    <property type="entry name" value="50S ribosomal protein L30"/>
    <property type="match status" value="1"/>
</dbReference>
<dbReference type="Gene3D" id="3.30.1390.20">
    <property type="entry name" value="Ribosomal protein L30, ferredoxin-like fold domain"/>
    <property type="match status" value="1"/>
</dbReference>
<dbReference type="HAMAP" id="MF_01371_B">
    <property type="entry name" value="Ribosomal_uL30_B"/>
    <property type="match status" value="1"/>
</dbReference>
<dbReference type="InterPro" id="IPR036919">
    <property type="entry name" value="Ribo_uL30_ferredoxin-like_sf"/>
</dbReference>
<dbReference type="InterPro" id="IPR005996">
    <property type="entry name" value="Ribosomal_uL30_bac-type"/>
</dbReference>
<dbReference type="InterPro" id="IPR018038">
    <property type="entry name" value="Ribosomal_uL30_CS"/>
</dbReference>
<dbReference type="InterPro" id="IPR016082">
    <property type="entry name" value="Ribosomal_uL30_ferredoxin-like"/>
</dbReference>
<dbReference type="NCBIfam" id="TIGR01308">
    <property type="entry name" value="rpmD_bact"/>
    <property type="match status" value="1"/>
</dbReference>
<dbReference type="PANTHER" id="PTHR15892:SF2">
    <property type="entry name" value="LARGE RIBOSOMAL SUBUNIT PROTEIN UL30M"/>
    <property type="match status" value="1"/>
</dbReference>
<dbReference type="PANTHER" id="PTHR15892">
    <property type="entry name" value="MITOCHONDRIAL RIBOSOMAL PROTEIN L30"/>
    <property type="match status" value="1"/>
</dbReference>
<dbReference type="Pfam" id="PF00327">
    <property type="entry name" value="Ribosomal_L30"/>
    <property type="match status" value="1"/>
</dbReference>
<dbReference type="PIRSF" id="PIRSF002211">
    <property type="entry name" value="Ribosomal_L30_bac-type"/>
    <property type="match status" value="1"/>
</dbReference>
<dbReference type="SUPFAM" id="SSF55129">
    <property type="entry name" value="Ribosomal protein L30p/L7e"/>
    <property type="match status" value="1"/>
</dbReference>
<dbReference type="PROSITE" id="PS00634">
    <property type="entry name" value="RIBOSOMAL_L30"/>
    <property type="match status" value="1"/>
</dbReference>
<reference key="1">
    <citation type="submission" date="2007-04" db="EMBL/GenBank/DDBJ databases">
        <title>Complete sequence of chromosome of Mycobacterium gilvum PYR-GCK.</title>
        <authorList>
            <consortium name="US DOE Joint Genome Institute"/>
            <person name="Copeland A."/>
            <person name="Lucas S."/>
            <person name="Lapidus A."/>
            <person name="Barry K."/>
            <person name="Detter J.C."/>
            <person name="Glavina del Rio T."/>
            <person name="Hammon N."/>
            <person name="Israni S."/>
            <person name="Dalin E."/>
            <person name="Tice H."/>
            <person name="Pitluck S."/>
            <person name="Chain P."/>
            <person name="Malfatti S."/>
            <person name="Shin M."/>
            <person name="Vergez L."/>
            <person name="Schmutz J."/>
            <person name="Larimer F."/>
            <person name="Land M."/>
            <person name="Hauser L."/>
            <person name="Kyrpides N."/>
            <person name="Mikhailova N."/>
            <person name="Miller C."/>
            <person name="Richardson P."/>
        </authorList>
    </citation>
    <scope>NUCLEOTIDE SEQUENCE [LARGE SCALE GENOMIC DNA]</scope>
    <source>
        <strain>PYR-GCK</strain>
    </source>
</reference>
<keyword id="KW-0687">Ribonucleoprotein</keyword>
<keyword id="KW-0689">Ribosomal protein</keyword>
<gene>
    <name evidence="1" type="primary">rpmD</name>
    <name type="ordered locus">Mflv_5029</name>
</gene>
<evidence type="ECO:0000255" key="1">
    <source>
        <dbReference type="HAMAP-Rule" id="MF_01371"/>
    </source>
</evidence>
<evidence type="ECO:0000305" key="2"/>
<protein>
    <recommendedName>
        <fullName evidence="1">Large ribosomal subunit protein uL30</fullName>
    </recommendedName>
    <alternativeName>
        <fullName evidence="2">50S ribosomal protein L30</fullName>
    </alternativeName>
</protein>
<accession>A4TED3</accession>
<feature type="chain" id="PRO_1000087255" description="Large ribosomal subunit protein uL30">
    <location>
        <begin position="1"/>
        <end position="61"/>
    </location>
</feature>